<dbReference type="EMBL" id="CP000768">
    <property type="protein sequence ID" value="ABS44813.1"/>
    <property type="molecule type" value="Genomic_DNA"/>
</dbReference>
<dbReference type="SMR" id="A7H4P5"/>
<dbReference type="KEGG" id="cjd:JJD26997_1442"/>
<dbReference type="HOGENOM" id="CLU_002794_4_1_7"/>
<dbReference type="Proteomes" id="UP000002302">
    <property type="component" value="Chromosome"/>
</dbReference>
<dbReference type="GO" id="GO:0005737">
    <property type="term" value="C:cytoplasm"/>
    <property type="evidence" value="ECO:0007669"/>
    <property type="project" value="UniProtKB-SubCell"/>
</dbReference>
<dbReference type="GO" id="GO:0005525">
    <property type="term" value="F:GTP binding"/>
    <property type="evidence" value="ECO:0007669"/>
    <property type="project" value="UniProtKB-UniRule"/>
</dbReference>
<dbReference type="GO" id="GO:0003924">
    <property type="term" value="F:GTPase activity"/>
    <property type="evidence" value="ECO:0007669"/>
    <property type="project" value="InterPro"/>
</dbReference>
<dbReference type="GO" id="GO:0003746">
    <property type="term" value="F:translation elongation factor activity"/>
    <property type="evidence" value="ECO:0007669"/>
    <property type="project" value="UniProtKB-UniRule"/>
</dbReference>
<dbReference type="GO" id="GO:0032790">
    <property type="term" value="P:ribosome disassembly"/>
    <property type="evidence" value="ECO:0007669"/>
    <property type="project" value="TreeGrafter"/>
</dbReference>
<dbReference type="CDD" id="cd01886">
    <property type="entry name" value="EF-G"/>
    <property type="match status" value="1"/>
</dbReference>
<dbReference type="CDD" id="cd16262">
    <property type="entry name" value="EFG_III"/>
    <property type="match status" value="1"/>
</dbReference>
<dbReference type="CDD" id="cd01434">
    <property type="entry name" value="EFG_mtEFG1_IV"/>
    <property type="match status" value="1"/>
</dbReference>
<dbReference type="CDD" id="cd03713">
    <property type="entry name" value="EFG_mtEFG_C"/>
    <property type="match status" value="1"/>
</dbReference>
<dbReference type="CDD" id="cd04088">
    <property type="entry name" value="EFG_mtEFG_II"/>
    <property type="match status" value="1"/>
</dbReference>
<dbReference type="FunFam" id="2.40.30.10:FF:000006">
    <property type="entry name" value="Elongation factor G"/>
    <property type="match status" value="1"/>
</dbReference>
<dbReference type="FunFam" id="3.30.230.10:FF:000003">
    <property type="entry name" value="Elongation factor G"/>
    <property type="match status" value="1"/>
</dbReference>
<dbReference type="FunFam" id="3.30.70.240:FF:000001">
    <property type="entry name" value="Elongation factor G"/>
    <property type="match status" value="1"/>
</dbReference>
<dbReference type="FunFam" id="3.30.70.870:FF:000001">
    <property type="entry name" value="Elongation factor G"/>
    <property type="match status" value="1"/>
</dbReference>
<dbReference type="FunFam" id="3.40.50.300:FF:000029">
    <property type="entry name" value="Elongation factor G"/>
    <property type="match status" value="1"/>
</dbReference>
<dbReference type="Gene3D" id="3.30.230.10">
    <property type="match status" value="1"/>
</dbReference>
<dbReference type="Gene3D" id="3.30.70.240">
    <property type="match status" value="1"/>
</dbReference>
<dbReference type="Gene3D" id="3.30.70.870">
    <property type="entry name" value="Elongation Factor G (Translational Gtpase), domain 3"/>
    <property type="match status" value="1"/>
</dbReference>
<dbReference type="Gene3D" id="3.40.50.300">
    <property type="entry name" value="P-loop containing nucleotide triphosphate hydrolases"/>
    <property type="match status" value="1"/>
</dbReference>
<dbReference type="Gene3D" id="2.40.30.10">
    <property type="entry name" value="Translation factors"/>
    <property type="match status" value="1"/>
</dbReference>
<dbReference type="HAMAP" id="MF_00054_B">
    <property type="entry name" value="EF_G_EF_2_B"/>
    <property type="match status" value="1"/>
</dbReference>
<dbReference type="InterPro" id="IPR053905">
    <property type="entry name" value="EF-G-like_DII"/>
</dbReference>
<dbReference type="InterPro" id="IPR041095">
    <property type="entry name" value="EFG_II"/>
</dbReference>
<dbReference type="InterPro" id="IPR009022">
    <property type="entry name" value="EFG_III"/>
</dbReference>
<dbReference type="InterPro" id="IPR035647">
    <property type="entry name" value="EFG_III/V"/>
</dbReference>
<dbReference type="InterPro" id="IPR047872">
    <property type="entry name" value="EFG_IV"/>
</dbReference>
<dbReference type="InterPro" id="IPR035649">
    <property type="entry name" value="EFG_V"/>
</dbReference>
<dbReference type="InterPro" id="IPR000640">
    <property type="entry name" value="EFG_V-like"/>
</dbReference>
<dbReference type="InterPro" id="IPR031157">
    <property type="entry name" value="G_TR_CS"/>
</dbReference>
<dbReference type="InterPro" id="IPR027417">
    <property type="entry name" value="P-loop_NTPase"/>
</dbReference>
<dbReference type="InterPro" id="IPR020568">
    <property type="entry name" value="Ribosomal_Su5_D2-typ_SF"/>
</dbReference>
<dbReference type="InterPro" id="IPR014721">
    <property type="entry name" value="Ribsml_uS5_D2-typ_fold_subgr"/>
</dbReference>
<dbReference type="InterPro" id="IPR005225">
    <property type="entry name" value="Small_GTP-bd"/>
</dbReference>
<dbReference type="InterPro" id="IPR000795">
    <property type="entry name" value="T_Tr_GTP-bd_dom"/>
</dbReference>
<dbReference type="InterPro" id="IPR009000">
    <property type="entry name" value="Transl_B-barrel_sf"/>
</dbReference>
<dbReference type="InterPro" id="IPR004540">
    <property type="entry name" value="Transl_elong_EFG/EF2"/>
</dbReference>
<dbReference type="InterPro" id="IPR005517">
    <property type="entry name" value="Transl_elong_EFG/EF2_IV"/>
</dbReference>
<dbReference type="NCBIfam" id="TIGR00484">
    <property type="entry name" value="EF-G"/>
    <property type="match status" value="1"/>
</dbReference>
<dbReference type="NCBIfam" id="NF009379">
    <property type="entry name" value="PRK12740.1-3"/>
    <property type="match status" value="1"/>
</dbReference>
<dbReference type="NCBIfam" id="NF009381">
    <property type="entry name" value="PRK12740.1-5"/>
    <property type="match status" value="1"/>
</dbReference>
<dbReference type="NCBIfam" id="TIGR00231">
    <property type="entry name" value="small_GTP"/>
    <property type="match status" value="1"/>
</dbReference>
<dbReference type="PANTHER" id="PTHR43261:SF1">
    <property type="entry name" value="RIBOSOME-RELEASING FACTOR 2, MITOCHONDRIAL"/>
    <property type="match status" value="1"/>
</dbReference>
<dbReference type="PANTHER" id="PTHR43261">
    <property type="entry name" value="TRANSLATION ELONGATION FACTOR G-RELATED"/>
    <property type="match status" value="1"/>
</dbReference>
<dbReference type="Pfam" id="PF22042">
    <property type="entry name" value="EF-G_D2"/>
    <property type="match status" value="1"/>
</dbReference>
<dbReference type="Pfam" id="PF00679">
    <property type="entry name" value="EFG_C"/>
    <property type="match status" value="1"/>
</dbReference>
<dbReference type="Pfam" id="PF14492">
    <property type="entry name" value="EFG_III"/>
    <property type="match status" value="1"/>
</dbReference>
<dbReference type="Pfam" id="PF03764">
    <property type="entry name" value="EFG_IV"/>
    <property type="match status" value="1"/>
</dbReference>
<dbReference type="Pfam" id="PF00009">
    <property type="entry name" value="GTP_EFTU"/>
    <property type="match status" value="1"/>
</dbReference>
<dbReference type="PRINTS" id="PR00315">
    <property type="entry name" value="ELONGATNFCT"/>
</dbReference>
<dbReference type="SMART" id="SM00838">
    <property type="entry name" value="EFG_C"/>
    <property type="match status" value="1"/>
</dbReference>
<dbReference type="SMART" id="SM00889">
    <property type="entry name" value="EFG_IV"/>
    <property type="match status" value="1"/>
</dbReference>
<dbReference type="SUPFAM" id="SSF54980">
    <property type="entry name" value="EF-G C-terminal domain-like"/>
    <property type="match status" value="2"/>
</dbReference>
<dbReference type="SUPFAM" id="SSF52540">
    <property type="entry name" value="P-loop containing nucleoside triphosphate hydrolases"/>
    <property type="match status" value="1"/>
</dbReference>
<dbReference type="SUPFAM" id="SSF54211">
    <property type="entry name" value="Ribosomal protein S5 domain 2-like"/>
    <property type="match status" value="1"/>
</dbReference>
<dbReference type="SUPFAM" id="SSF50447">
    <property type="entry name" value="Translation proteins"/>
    <property type="match status" value="1"/>
</dbReference>
<dbReference type="PROSITE" id="PS00301">
    <property type="entry name" value="G_TR_1"/>
    <property type="match status" value="1"/>
</dbReference>
<dbReference type="PROSITE" id="PS51722">
    <property type="entry name" value="G_TR_2"/>
    <property type="match status" value="1"/>
</dbReference>
<comment type="function">
    <text evidence="1">Catalyzes the GTP-dependent ribosomal translocation step during translation elongation. During this step, the ribosome changes from the pre-translocational (PRE) to the post-translocational (POST) state as the newly formed A-site-bound peptidyl-tRNA and P-site-bound deacylated tRNA move to the P and E sites, respectively. Catalyzes the coordinated movement of the two tRNA molecules, the mRNA and conformational changes in the ribosome.</text>
</comment>
<comment type="subcellular location">
    <subcellularLocation>
        <location evidence="1">Cytoplasm</location>
    </subcellularLocation>
</comment>
<comment type="similarity">
    <text evidence="1">Belongs to the TRAFAC class translation factor GTPase superfamily. Classic translation factor GTPase family. EF-G/EF-2 subfamily.</text>
</comment>
<feature type="chain" id="PRO_1000008812" description="Elongation factor G">
    <location>
        <begin position="1"/>
        <end position="691"/>
    </location>
</feature>
<feature type="domain" description="tr-type G">
    <location>
        <begin position="8"/>
        <end position="283"/>
    </location>
</feature>
<feature type="binding site" evidence="1">
    <location>
        <begin position="17"/>
        <end position="24"/>
    </location>
    <ligand>
        <name>GTP</name>
        <dbReference type="ChEBI" id="CHEBI:37565"/>
    </ligand>
</feature>
<feature type="binding site" evidence="1">
    <location>
        <begin position="81"/>
        <end position="85"/>
    </location>
    <ligand>
        <name>GTP</name>
        <dbReference type="ChEBI" id="CHEBI:37565"/>
    </ligand>
</feature>
<feature type="binding site" evidence="1">
    <location>
        <begin position="135"/>
        <end position="138"/>
    </location>
    <ligand>
        <name>GTP</name>
        <dbReference type="ChEBI" id="CHEBI:37565"/>
    </ligand>
</feature>
<name>EFG_CAMJD</name>
<gene>
    <name evidence="1" type="primary">fusA</name>
    <name type="ordered locus">JJD26997_1442</name>
</gene>
<evidence type="ECO:0000255" key="1">
    <source>
        <dbReference type="HAMAP-Rule" id="MF_00054"/>
    </source>
</evidence>
<keyword id="KW-0963">Cytoplasm</keyword>
<keyword id="KW-0251">Elongation factor</keyword>
<keyword id="KW-0342">GTP-binding</keyword>
<keyword id="KW-0547">Nucleotide-binding</keyword>
<keyword id="KW-0648">Protein biosynthesis</keyword>
<reference key="1">
    <citation type="submission" date="2007-07" db="EMBL/GenBank/DDBJ databases">
        <title>Complete genome sequence of Campylobacter jejuni subsp doylei 269.97 isolated from human blood.</title>
        <authorList>
            <person name="Fouts D.E."/>
            <person name="Mongodin E.F."/>
            <person name="Puiu D."/>
            <person name="Sebastian Y."/>
            <person name="Miller W.G."/>
            <person name="Mandrell R.E."/>
            <person name="Lastovica A.J."/>
            <person name="Nelson K.E."/>
        </authorList>
    </citation>
    <scope>NUCLEOTIDE SEQUENCE [LARGE SCALE GENOMIC DNA]</scope>
    <source>
        <strain>ATCC BAA-1458 / RM4099 / 269.97</strain>
    </source>
</reference>
<sequence>MSRSTPLKKVRNIGIAAHIDAGKTTTSERILFFTGMSHKIGEVHDGAATMDWMEQEKERGITITSAATTCFWKDHQINLIDTPGHVDFTIEVERSMRVLDGAVAVFCSVGGVQPQSETVWRQANKYGVPRIVFVNKMDRIGANFYNVEDQIRNRLKANPVPLQIPIGAEDNFKGVIDLVTMKALVWEDDTKPTDYVEKEIPAELKEKAEEYRTKMIEAVSETSDELMEKYLGGEELSLEEIKTGIKAGCLSLSIVPMLCGTAFKNKGVQPLLDAVVAYLPAPDEVANIKGEYEDGTEVSVKSTDDGEFAGLAFKIMTDPFVGQLTFVRVYRGCLESGSYAYNSTKDKKERIGRLLKMHSNKREEIKVLYAGEIGAVVGLKDTLTGDTLASEKDKVILERMDFPDPVISVAVEPKTKADQEKMSIALNKLAQEDPSFRVSTDEESGQTIISGMGELHLEIIVDRMLREFKVEAEVGQPQVAYRETIRKAVEQEYKYAKQSGGRGQYGHVFLRLEPLEPGSGYEFVNDIKGGVIPKEYIPAVDKGVQEALQNGVLAGYPVEDVKVTVYDGSYHEVDSSEMAFKLAASMGFKEGARKAGAVILEPMMKVEVETPEDYMGDVIGDLNKRRGQVNSMDERGGNKIITAFCPLAEMFGYSTDLRSQTQGRATYSMEFNHYDEVPKNVADEIIKKRNG</sequence>
<accession>A7H4P5</accession>
<protein>
    <recommendedName>
        <fullName evidence="1">Elongation factor G</fullName>
        <shortName evidence="1">EF-G</shortName>
    </recommendedName>
</protein>
<proteinExistence type="inferred from homology"/>
<organism>
    <name type="scientific">Campylobacter jejuni subsp. doylei (strain ATCC BAA-1458 / RM4099 / 269.97)</name>
    <dbReference type="NCBI Taxonomy" id="360109"/>
    <lineage>
        <taxon>Bacteria</taxon>
        <taxon>Pseudomonadati</taxon>
        <taxon>Campylobacterota</taxon>
        <taxon>Epsilonproteobacteria</taxon>
        <taxon>Campylobacterales</taxon>
        <taxon>Campylobacteraceae</taxon>
        <taxon>Campylobacter</taxon>
    </lineage>
</organism>